<gene>
    <name type="primary">Adhr</name>
    <name type="synonym">Adh-dup</name>
</gene>
<protein>
    <recommendedName>
        <fullName>Alcohol dehydrogenase-related 31 kDa protein</fullName>
    </recommendedName>
</protein>
<proteinExistence type="inferred from homology"/>
<reference key="1">
    <citation type="journal article" date="1994" name="Mol. Biol. Evol.">
        <title>The molecular evolution of the alcohol dehydrogenase and alcohol dehydrogenase-related genes in the Drosophila melanogaster species subgroup.</title>
        <authorList>
            <person name="Jeffs P.S."/>
            <person name="Holmes E.C."/>
            <person name="Ashburner M."/>
        </authorList>
    </citation>
    <scope>NUCLEOTIDE SEQUENCE [GENOMIC DNA]</scope>
    <source>
        <strain>Gif-sur-Yvette stock 154.1</strain>
    </source>
</reference>
<comment type="similarity">
    <text evidence="3">Belongs to the short-chain dehydrogenases/reductases (SDR) family.</text>
</comment>
<sequence length="202" mass="22111">MFDLTGKHVCYVADCGGIALETSKVLMTKNIAKLAILQSLENPQAIAQLQSIKPSTQIFFWTYDVTMAREEMKKYFDEVMVQMDYIDVLINGATLCDENNIDATINTNLTGMMNTVATVLPHMDRKMGGSGGLIVNVTSVIGLDPSPVFCAYSASKFGVIGFTRSLADPLYYSQNGVAVMAVCCGPTRVFVDRELKAFLEYG</sequence>
<organism>
    <name type="scientific">Drosophila erecta</name>
    <name type="common">Fruit fly</name>
    <dbReference type="NCBI Taxonomy" id="7220"/>
    <lineage>
        <taxon>Eukaryota</taxon>
        <taxon>Metazoa</taxon>
        <taxon>Ecdysozoa</taxon>
        <taxon>Arthropoda</taxon>
        <taxon>Hexapoda</taxon>
        <taxon>Insecta</taxon>
        <taxon>Pterygota</taxon>
        <taxon>Neoptera</taxon>
        <taxon>Endopterygota</taxon>
        <taxon>Diptera</taxon>
        <taxon>Brachycera</taxon>
        <taxon>Muscomorpha</taxon>
        <taxon>Ephydroidea</taxon>
        <taxon>Drosophilidae</taxon>
        <taxon>Drosophila</taxon>
        <taxon>Sophophora</taxon>
    </lineage>
</organism>
<feature type="chain" id="PRO_0000054503" description="Alcohol dehydrogenase-related 31 kDa protein">
    <location>
        <begin position="1"/>
        <end position="202" status="greater than"/>
    </location>
</feature>
<feature type="active site" description="Proton acceptor" evidence="2">
    <location>
        <position position="152"/>
    </location>
</feature>
<feature type="binding site" evidence="1">
    <location>
        <begin position="11"/>
        <end position="34"/>
    </location>
    <ligand>
        <name>NAD(+)</name>
        <dbReference type="ChEBI" id="CHEBI:57540"/>
    </ligand>
</feature>
<feature type="binding site" evidence="1">
    <location>
        <position position="139"/>
    </location>
    <ligand>
        <name>substrate</name>
    </ligand>
</feature>
<feature type="non-terminal residue">
    <location>
        <position position="202"/>
    </location>
</feature>
<accession>P28485</accession>
<evidence type="ECO:0000250" key="1"/>
<evidence type="ECO:0000255" key="2">
    <source>
        <dbReference type="PROSITE-ProRule" id="PRU10001"/>
    </source>
</evidence>
<evidence type="ECO:0000305" key="3"/>
<dbReference type="EMBL" id="X54116">
    <property type="protein sequence ID" value="CAA38058.1"/>
    <property type="molecule type" value="Genomic_DNA"/>
</dbReference>
<dbReference type="SMR" id="P28485"/>
<dbReference type="eggNOG" id="KOG4169">
    <property type="taxonomic scope" value="Eukaryota"/>
</dbReference>
<dbReference type="OrthoDB" id="417891at2759"/>
<dbReference type="GO" id="GO:0005737">
    <property type="term" value="C:cytoplasm"/>
    <property type="evidence" value="ECO:0007669"/>
    <property type="project" value="TreeGrafter"/>
</dbReference>
<dbReference type="GO" id="GO:0016491">
    <property type="term" value="F:oxidoreductase activity"/>
    <property type="evidence" value="ECO:0007669"/>
    <property type="project" value="UniProtKB-KW"/>
</dbReference>
<dbReference type="CDD" id="cd05323">
    <property type="entry name" value="ADH_SDR_c_like"/>
    <property type="match status" value="1"/>
</dbReference>
<dbReference type="Gene3D" id="3.40.50.720">
    <property type="entry name" value="NAD(P)-binding Rossmann-like Domain"/>
    <property type="match status" value="1"/>
</dbReference>
<dbReference type="InterPro" id="IPR002427">
    <property type="entry name" value="ADH-rel"/>
</dbReference>
<dbReference type="InterPro" id="IPR036291">
    <property type="entry name" value="NAD(P)-bd_dom_sf"/>
</dbReference>
<dbReference type="InterPro" id="IPR020904">
    <property type="entry name" value="Sc_DH/Rdtase_CS"/>
</dbReference>
<dbReference type="InterPro" id="IPR002347">
    <property type="entry name" value="SDR_fam"/>
</dbReference>
<dbReference type="PANTHER" id="PTHR44229">
    <property type="entry name" value="15-HYDROXYPROSTAGLANDIN DEHYDROGENASE [NAD(+)]"/>
    <property type="match status" value="1"/>
</dbReference>
<dbReference type="PANTHER" id="PTHR44229:SF8">
    <property type="entry name" value="ALCOHOL DEHYDROGENASE-RELATED"/>
    <property type="match status" value="1"/>
</dbReference>
<dbReference type="Pfam" id="PF00106">
    <property type="entry name" value="adh_short"/>
    <property type="match status" value="1"/>
</dbReference>
<dbReference type="PRINTS" id="PR01170">
    <property type="entry name" value="ADHRELATED"/>
</dbReference>
<dbReference type="PRINTS" id="PR01167">
    <property type="entry name" value="INSADHFAMILY"/>
</dbReference>
<dbReference type="PRINTS" id="PR00080">
    <property type="entry name" value="SDRFAMILY"/>
</dbReference>
<dbReference type="SUPFAM" id="SSF51735">
    <property type="entry name" value="NAD(P)-binding Rossmann-fold domains"/>
    <property type="match status" value="1"/>
</dbReference>
<dbReference type="PROSITE" id="PS00061">
    <property type="entry name" value="ADH_SHORT"/>
    <property type="match status" value="1"/>
</dbReference>
<name>ADHR_DROER</name>
<keyword id="KW-0560">Oxidoreductase</keyword>